<comment type="function">
    <text evidence="1">Catalyzes the NAD-dependent conversion of D-erythrose 4-phosphate to 4-phosphoerythronate.</text>
</comment>
<comment type="catalytic activity">
    <reaction evidence="1">
        <text>D-erythrose 4-phosphate + NAD(+) + H2O = 4-phospho-D-erythronate + NADH + 2 H(+)</text>
        <dbReference type="Rhea" id="RHEA:12056"/>
        <dbReference type="ChEBI" id="CHEBI:15377"/>
        <dbReference type="ChEBI" id="CHEBI:15378"/>
        <dbReference type="ChEBI" id="CHEBI:16897"/>
        <dbReference type="ChEBI" id="CHEBI:57540"/>
        <dbReference type="ChEBI" id="CHEBI:57945"/>
        <dbReference type="ChEBI" id="CHEBI:58766"/>
        <dbReference type="EC" id="1.2.1.72"/>
    </reaction>
</comment>
<comment type="pathway">
    <text evidence="1">Cofactor biosynthesis; pyridoxine 5'-phosphate biosynthesis; pyridoxine 5'-phosphate from D-erythrose 4-phosphate: step 1/5.</text>
</comment>
<comment type="subunit">
    <text evidence="1">Homotetramer.</text>
</comment>
<comment type="subcellular location">
    <subcellularLocation>
        <location evidence="1">Cytoplasm</location>
    </subcellularLocation>
</comment>
<comment type="similarity">
    <text evidence="1">Belongs to the glyceraldehyde-3-phosphate dehydrogenase family. Epd subfamily.</text>
</comment>
<evidence type="ECO:0000255" key="1">
    <source>
        <dbReference type="HAMAP-Rule" id="MF_01640"/>
    </source>
</evidence>
<name>E4PD_ALIF1</name>
<proteinExistence type="inferred from homology"/>
<organism>
    <name type="scientific">Aliivibrio fischeri (strain ATCC 700601 / ES114)</name>
    <name type="common">Vibrio fischeri</name>
    <dbReference type="NCBI Taxonomy" id="312309"/>
    <lineage>
        <taxon>Bacteria</taxon>
        <taxon>Pseudomonadati</taxon>
        <taxon>Pseudomonadota</taxon>
        <taxon>Gammaproteobacteria</taxon>
        <taxon>Vibrionales</taxon>
        <taxon>Vibrionaceae</taxon>
        <taxon>Aliivibrio</taxon>
    </lineage>
</organism>
<feature type="chain" id="PRO_0000293174" description="D-erythrose-4-phosphate dehydrogenase">
    <location>
        <begin position="1"/>
        <end position="339"/>
    </location>
</feature>
<feature type="active site" description="Nucleophile" evidence="1">
    <location>
        <position position="159"/>
    </location>
</feature>
<feature type="binding site" evidence="1">
    <location>
        <begin position="11"/>
        <end position="12"/>
    </location>
    <ligand>
        <name>NAD(+)</name>
        <dbReference type="ChEBI" id="CHEBI:57540"/>
    </ligand>
</feature>
<feature type="binding site" evidence="1">
    <location>
        <begin position="158"/>
        <end position="160"/>
    </location>
    <ligand>
        <name>substrate</name>
    </ligand>
</feature>
<feature type="binding site" evidence="1">
    <location>
        <position position="204"/>
    </location>
    <ligand>
        <name>substrate</name>
    </ligand>
</feature>
<feature type="binding site" evidence="1">
    <location>
        <begin position="217"/>
        <end position="218"/>
    </location>
    <ligand>
        <name>substrate</name>
    </ligand>
</feature>
<feature type="binding site" evidence="1">
    <location>
        <position position="240"/>
    </location>
    <ligand>
        <name>substrate</name>
    </ligand>
</feature>
<feature type="binding site" evidence="1">
    <location>
        <position position="322"/>
    </location>
    <ligand>
        <name>NAD(+)</name>
        <dbReference type="ChEBI" id="CHEBI:57540"/>
    </ligand>
</feature>
<feature type="site" description="Activates thiol group during catalysis" evidence="1">
    <location>
        <position position="186"/>
    </location>
</feature>
<sequence>MLRVAINGFGRIGRSVLRALYESDKRDKIEVVAVNELSQPEAMAHLFQYDSTHGRFQHKVTHDQEYPYSDVPDSSQDKVRILHQADLSLLPWQSLEVDLVLDCTGVYGSKSDGEKHITAGAKKVLFSHPGGSDLDNTIIYGVNHDTLLPEHRIVSNGSCTTNCIIPVIKAIDDAFGIDSGTITTIHSSMNDQQVIDAYHSDLRRTRAASQSIIPVDTKLHKGIERIFPKFSNKFEAISVRVPTVNVTAMDLSVTINTNVKVNDINQTIVNASRCTLHNIVDYTEAPLVSIDFNHDPHSAIVDGSQTRVSNGHLVKMLVWCDNEWGFANRMLDTALAMSK</sequence>
<gene>
    <name evidence="1" type="primary">epd</name>
    <name type="ordered locus">VF_0441</name>
</gene>
<accession>Q5E7R0</accession>
<keyword id="KW-0963">Cytoplasm</keyword>
<keyword id="KW-0520">NAD</keyword>
<keyword id="KW-0560">Oxidoreductase</keyword>
<keyword id="KW-0664">Pyridoxine biosynthesis</keyword>
<keyword id="KW-1185">Reference proteome</keyword>
<dbReference type="EC" id="1.2.1.72" evidence="1"/>
<dbReference type="EMBL" id="CP000020">
    <property type="protein sequence ID" value="AAW84936.1"/>
    <property type="molecule type" value="Genomic_DNA"/>
</dbReference>
<dbReference type="RefSeq" id="WP_011261223.1">
    <property type="nucleotide sequence ID" value="NC_006840.2"/>
</dbReference>
<dbReference type="RefSeq" id="YP_203824.1">
    <property type="nucleotide sequence ID" value="NC_006840.2"/>
</dbReference>
<dbReference type="SMR" id="Q5E7R0"/>
<dbReference type="STRING" id="312309.VF_0441"/>
<dbReference type="EnsemblBacteria" id="AAW84936">
    <property type="protein sequence ID" value="AAW84936"/>
    <property type="gene ID" value="VF_0441"/>
</dbReference>
<dbReference type="GeneID" id="54163078"/>
<dbReference type="KEGG" id="vfi:VF_0441"/>
<dbReference type="PATRIC" id="fig|312309.11.peg.431"/>
<dbReference type="eggNOG" id="COG0057">
    <property type="taxonomic scope" value="Bacteria"/>
</dbReference>
<dbReference type="HOGENOM" id="CLU_030140_0_2_6"/>
<dbReference type="OrthoDB" id="9803304at2"/>
<dbReference type="UniPathway" id="UPA00244">
    <property type="reaction ID" value="UER00309"/>
</dbReference>
<dbReference type="Proteomes" id="UP000000537">
    <property type="component" value="Chromosome I"/>
</dbReference>
<dbReference type="GO" id="GO:0005737">
    <property type="term" value="C:cytoplasm"/>
    <property type="evidence" value="ECO:0007669"/>
    <property type="project" value="UniProtKB-SubCell"/>
</dbReference>
<dbReference type="GO" id="GO:0048001">
    <property type="term" value="F:erythrose-4-phosphate dehydrogenase activity"/>
    <property type="evidence" value="ECO:0007669"/>
    <property type="project" value="UniProtKB-UniRule"/>
</dbReference>
<dbReference type="GO" id="GO:0051287">
    <property type="term" value="F:NAD binding"/>
    <property type="evidence" value="ECO:0007669"/>
    <property type="project" value="InterPro"/>
</dbReference>
<dbReference type="GO" id="GO:0042823">
    <property type="term" value="P:pyridoxal phosphate biosynthetic process"/>
    <property type="evidence" value="ECO:0007669"/>
    <property type="project" value="UniProtKB-UniRule"/>
</dbReference>
<dbReference type="GO" id="GO:0008615">
    <property type="term" value="P:pyridoxine biosynthetic process"/>
    <property type="evidence" value="ECO:0007669"/>
    <property type="project" value="UniProtKB-UniRule"/>
</dbReference>
<dbReference type="CDD" id="cd23937">
    <property type="entry name" value="GAPDH_C_E4PDH"/>
    <property type="match status" value="1"/>
</dbReference>
<dbReference type="FunFam" id="3.30.360.10:FF:000007">
    <property type="entry name" value="D-erythrose-4-phosphate dehydrogenase"/>
    <property type="match status" value="1"/>
</dbReference>
<dbReference type="FunFam" id="3.40.50.720:FF:000001">
    <property type="entry name" value="Glyceraldehyde-3-phosphate dehydrogenase"/>
    <property type="match status" value="1"/>
</dbReference>
<dbReference type="Gene3D" id="3.30.360.10">
    <property type="entry name" value="Dihydrodipicolinate Reductase, domain 2"/>
    <property type="match status" value="1"/>
</dbReference>
<dbReference type="Gene3D" id="3.40.50.720">
    <property type="entry name" value="NAD(P)-binding Rossmann-like Domain"/>
    <property type="match status" value="1"/>
</dbReference>
<dbReference type="HAMAP" id="MF_01640">
    <property type="entry name" value="E4P_dehydrog"/>
    <property type="match status" value="1"/>
</dbReference>
<dbReference type="InterPro" id="IPR006422">
    <property type="entry name" value="E4P_DH_bac"/>
</dbReference>
<dbReference type="InterPro" id="IPR020831">
    <property type="entry name" value="GlycerAld/Erythrose_P_DH"/>
</dbReference>
<dbReference type="InterPro" id="IPR020829">
    <property type="entry name" value="GlycerAld_3-P_DH_cat"/>
</dbReference>
<dbReference type="InterPro" id="IPR020828">
    <property type="entry name" value="GlycerAld_3-P_DH_NAD(P)-bd"/>
</dbReference>
<dbReference type="InterPro" id="IPR036291">
    <property type="entry name" value="NAD(P)-bd_dom_sf"/>
</dbReference>
<dbReference type="NCBIfam" id="TIGR01532">
    <property type="entry name" value="E4PD_g-proteo"/>
    <property type="match status" value="1"/>
</dbReference>
<dbReference type="NCBIfam" id="NF010058">
    <property type="entry name" value="PRK13535.1"/>
    <property type="match status" value="1"/>
</dbReference>
<dbReference type="PANTHER" id="PTHR43148">
    <property type="entry name" value="GLYCERALDEHYDE-3-PHOSPHATE DEHYDROGENASE 2"/>
    <property type="match status" value="1"/>
</dbReference>
<dbReference type="Pfam" id="PF02800">
    <property type="entry name" value="Gp_dh_C"/>
    <property type="match status" value="1"/>
</dbReference>
<dbReference type="Pfam" id="PF00044">
    <property type="entry name" value="Gp_dh_N"/>
    <property type="match status" value="1"/>
</dbReference>
<dbReference type="PIRSF" id="PIRSF000149">
    <property type="entry name" value="GAP_DH"/>
    <property type="match status" value="1"/>
</dbReference>
<dbReference type="PRINTS" id="PR00078">
    <property type="entry name" value="G3PDHDRGNASE"/>
</dbReference>
<dbReference type="SMART" id="SM00846">
    <property type="entry name" value="Gp_dh_N"/>
    <property type="match status" value="1"/>
</dbReference>
<dbReference type="SUPFAM" id="SSF55347">
    <property type="entry name" value="Glyceraldehyde-3-phosphate dehydrogenase-like, C-terminal domain"/>
    <property type="match status" value="1"/>
</dbReference>
<dbReference type="SUPFAM" id="SSF51735">
    <property type="entry name" value="NAD(P)-binding Rossmann-fold domains"/>
    <property type="match status" value="1"/>
</dbReference>
<reference key="1">
    <citation type="journal article" date="2005" name="Proc. Natl. Acad. Sci. U.S.A.">
        <title>Complete genome sequence of Vibrio fischeri: a symbiotic bacterium with pathogenic congeners.</title>
        <authorList>
            <person name="Ruby E.G."/>
            <person name="Urbanowski M."/>
            <person name="Campbell J."/>
            <person name="Dunn A."/>
            <person name="Faini M."/>
            <person name="Gunsalus R."/>
            <person name="Lostroh P."/>
            <person name="Lupp C."/>
            <person name="McCann J."/>
            <person name="Millikan D."/>
            <person name="Schaefer A."/>
            <person name="Stabb E."/>
            <person name="Stevens A."/>
            <person name="Visick K."/>
            <person name="Whistler C."/>
            <person name="Greenberg E.P."/>
        </authorList>
    </citation>
    <scope>NUCLEOTIDE SEQUENCE [LARGE SCALE GENOMIC DNA]</scope>
    <source>
        <strain>ATCC 700601 / ES114</strain>
    </source>
</reference>
<protein>
    <recommendedName>
        <fullName evidence="1">D-erythrose-4-phosphate dehydrogenase</fullName>
        <shortName evidence="1">E4PDH</shortName>
        <ecNumber evidence="1">1.2.1.72</ecNumber>
    </recommendedName>
</protein>